<feature type="signal peptide" evidence="2">
    <location>
        <begin position="1"/>
        <end position="20"/>
    </location>
</feature>
<feature type="chain" id="PRO_0000394568" description="Probable pectate lyase C">
    <location>
        <begin position="21"/>
        <end position="420"/>
    </location>
</feature>
<feature type="domain" description="EF-hand">
    <location>
        <begin position="262"/>
        <end position="297"/>
    </location>
</feature>
<feature type="region of interest" description="Disordered" evidence="4">
    <location>
        <begin position="358"/>
        <end position="396"/>
    </location>
</feature>
<feature type="active site" evidence="2">
    <location>
        <position position="205"/>
    </location>
</feature>
<feature type="binding site" evidence="3">
    <location>
        <position position="275"/>
    </location>
    <ligand>
        <name>Ca(2+)</name>
        <dbReference type="ChEBI" id="CHEBI:29108"/>
    </ligand>
</feature>
<feature type="binding site" evidence="3">
    <location>
        <position position="277"/>
    </location>
    <ligand>
        <name>Ca(2+)</name>
        <dbReference type="ChEBI" id="CHEBI:29108"/>
    </ligand>
</feature>
<feature type="binding site" evidence="3">
    <location>
        <position position="279"/>
    </location>
    <ligand>
        <name>Ca(2+)</name>
        <dbReference type="ChEBI" id="CHEBI:29108"/>
    </ligand>
</feature>
<feature type="binding site" evidence="3">
    <location>
        <position position="281"/>
    </location>
    <ligand>
        <name>Ca(2+)</name>
        <dbReference type="ChEBI" id="CHEBI:29108"/>
    </ligand>
</feature>
<feature type="binding site" evidence="3">
    <location>
        <position position="286"/>
    </location>
    <ligand>
        <name>Ca(2+)</name>
        <dbReference type="ChEBI" id="CHEBI:29108"/>
    </ligand>
</feature>
<feature type="glycosylation site" description="N-linked (GlcNAc...) asparagine" evidence="2">
    <location>
        <position position="49"/>
    </location>
</feature>
<feature type="glycosylation site" description="N-linked (GlcNAc...) asparagine" evidence="2">
    <location>
        <position position="165"/>
    </location>
</feature>
<feature type="glycosylation site" description="N-linked (GlcNAc...) asparagine" evidence="2">
    <location>
        <position position="202"/>
    </location>
</feature>
<feature type="glycosylation site" description="N-linked (GlcNAc...) asparagine" evidence="2">
    <location>
        <position position="394"/>
    </location>
</feature>
<protein>
    <recommendedName>
        <fullName>Probable pectate lyase C</fullName>
        <ecNumber>4.2.2.2</ecNumber>
    </recommendedName>
</protein>
<sequence>MKLSAPLLVSLAAFSQAVTALVAFPGAEGFGANAIGGRNGQVYVVTNLNDSGTGSLRDAVSATDRIVVFAVGGVIKISDRIVVSKRVTILGQTAPGDGITVYGNGWSFSNADDAIVRYIRIRMGKGGSSGKDALGIAEGNRMIFDHVSVSWGRDETFSINGDASNITVQNSIIAQGLETHSCGGLMQTDGGVSLFRNLYIDNKTRNPKVKGVNEFTNNVVYNWGGGGGYIAGDSAGQSYANIIGNYFISGPSTSVTAFTRGNANFHGYVQNNYYDPDKDGQLDGFELGVSSSNYGGVAIMSSKYNYPAVAYTMSPAEAVTYVTKYAGASKVRDSVDTQLIAQVQSWGTEGGLISDEATMGGPGTLNGGTPAKDTDGDGIPDEAEKQLGTDPNTNDSMKLHSSGYTYLEVWANSLVPSTYH</sequence>
<keyword id="KW-0106">Calcium</keyword>
<keyword id="KW-0119">Carbohydrate metabolism</keyword>
<keyword id="KW-0961">Cell wall biogenesis/degradation</keyword>
<keyword id="KW-0325">Glycoprotein</keyword>
<keyword id="KW-0456">Lyase</keyword>
<keyword id="KW-0479">Metal-binding</keyword>
<keyword id="KW-0624">Polysaccharide degradation</keyword>
<keyword id="KW-0964">Secreted</keyword>
<keyword id="KW-0732">Signal</keyword>
<name>PLYC_ASPFC</name>
<organism>
    <name type="scientific">Aspergillus fumigatus (strain CBS 144.89 / FGSC A1163 / CEA10)</name>
    <name type="common">Neosartorya fumigata</name>
    <dbReference type="NCBI Taxonomy" id="451804"/>
    <lineage>
        <taxon>Eukaryota</taxon>
        <taxon>Fungi</taxon>
        <taxon>Dikarya</taxon>
        <taxon>Ascomycota</taxon>
        <taxon>Pezizomycotina</taxon>
        <taxon>Eurotiomycetes</taxon>
        <taxon>Eurotiomycetidae</taxon>
        <taxon>Eurotiales</taxon>
        <taxon>Aspergillaceae</taxon>
        <taxon>Aspergillus</taxon>
        <taxon>Aspergillus subgen. Fumigati</taxon>
    </lineage>
</organism>
<comment type="function">
    <text evidence="1">Pectinolytic enzyme consist of four classes of enzymes: pectin lyase, polygalacturonase, pectin methylesterase and rhamnogalacturonase. Among pectinolytic enzymes, pectin lyase is the most important in depolymerization of pectin, since it cleaves internal glycosidic bonds of highly methylated pectins. Favors pectate, the anion, over pectin, the methyl ester (By similarity).</text>
</comment>
<comment type="catalytic activity">
    <reaction>
        <text>Eliminative cleavage of (1-&gt;4)-alpha-D-galacturonan to give oligosaccharides with 4-deoxy-alpha-D-galact-4-enuronosyl groups at their non-reducing ends.</text>
        <dbReference type="EC" id="4.2.2.2"/>
    </reaction>
</comment>
<comment type="cofactor">
    <cofactor evidence="1">
        <name>Ca(2+)</name>
        <dbReference type="ChEBI" id="CHEBI:29108"/>
    </cofactor>
    <text evidence="1">Binds 1 Ca(2+) ion per subunit.</text>
</comment>
<comment type="subcellular location">
    <subcellularLocation>
        <location evidence="1">Secreted</location>
    </subcellularLocation>
</comment>
<comment type="similarity">
    <text evidence="5">Belongs to the polysaccharide lyase 1 family.</text>
</comment>
<evidence type="ECO:0000250" key="1"/>
<evidence type="ECO:0000255" key="2"/>
<evidence type="ECO:0000255" key="3">
    <source>
        <dbReference type="PROSITE-ProRule" id="PRU10142"/>
    </source>
</evidence>
<evidence type="ECO:0000256" key="4">
    <source>
        <dbReference type="SAM" id="MobiDB-lite"/>
    </source>
</evidence>
<evidence type="ECO:0000305" key="5"/>
<gene>
    <name type="primary">plyC</name>
    <name type="ORF">AFUB_000360</name>
</gene>
<accession>B0XMA2</accession>
<dbReference type="EC" id="4.2.2.2"/>
<dbReference type="EMBL" id="DS499594">
    <property type="protein sequence ID" value="EDP55346.1"/>
    <property type="molecule type" value="Genomic_DNA"/>
</dbReference>
<dbReference type="SMR" id="B0XMA2"/>
<dbReference type="GlyCosmos" id="B0XMA2">
    <property type="glycosylation" value="4 sites, No reported glycans"/>
</dbReference>
<dbReference type="EnsemblFungi" id="EDP55346">
    <property type="protein sequence ID" value="EDP55346"/>
    <property type="gene ID" value="AFUB_000360"/>
</dbReference>
<dbReference type="VEuPathDB" id="FungiDB:AFUB_000360"/>
<dbReference type="HOGENOM" id="CLU_016764_1_1_1"/>
<dbReference type="OrthoDB" id="121282at5052"/>
<dbReference type="Proteomes" id="UP000001699">
    <property type="component" value="Unassembled WGS sequence"/>
</dbReference>
<dbReference type="GO" id="GO:0005576">
    <property type="term" value="C:extracellular region"/>
    <property type="evidence" value="ECO:0007669"/>
    <property type="project" value="UniProtKB-SubCell"/>
</dbReference>
<dbReference type="GO" id="GO:0046872">
    <property type="term" value="F:metal ion binding"/>
    <property type="evidence" value="ECO:0007669"/>
    <property type="project" value="UniProtKB-KW"/>
</dbReference>
<dbReference type="GO" id="GO:0030570">
    <property type="term" value="F:pectate lyase activity"/>
    <property type="evidence" value="ECO:0007669"/>
    <property type="project" value="UniProtKB-EC"/>
</dbReference>
<dbReference type="GO" id="GO:0071555">
    <property type="term" value="P:cell wall organization"/>
    <property type="evidence" value="ECO:0007669"/>
    <property type="project" value="UniProtKB-KW"/>
</dbReference>
<dbReference type="GO" id="GO:0000272">
    <property type="term" value="P:polysaccharide catabolic process"/>
    <property type="evidence" value="ECO:0007669"/>
    <property type="project" value="UniProtKB-KW"/>
</dbReference>
<dbReference type="Gene3D" id="2.160.20.10">
    <property type="entry name" value="Single-stranded right-handed beta-helix, Pectin lyase-like"/>
    <property type="match status" value="1"/>
</dbReference>
<dbReference type="InterPro" id="IPR018247">
    <property type="entry name" value="EF_Hand_1_Ca_BS"/>
</dbReference>
<dbReference type="InterPro" id="IPR012334">
    <property type="entry name" value="Pectin_lyas_fold"/>
</dbReference>
<dbReference type="InterPro" id="IPR011050">
    <property type="entry name" value="Pectin_lyase_fold/virulence"/>
</dbReference>
<dbReference type="InterPro" id="IPR052063">
    <property type="entry name" value="Polysaccharide_Lyase_1"/>
</dbReference>
<dbReference type="PANTHER" id="PTHR42970">
    <property type="entry name" value="PECTATE LYASE C-RELATED"/>
    <property type="match status" value="1"/>
</dbReference>
<dbReference type="PANTHER" id="PTHR42970:SF1">
    <property type="entry name" value="PECTATE LYASE C-RELATED"/>
    <property type="match status" value="1"/>
</dbReference>
<dbReference type="Pfam" id="PF18884">
    <property type="entry name" value="TSP3_bac"/>
    <property type="match status" value="1"/>
</dbReference>
<dbReference type="SUPFAM" id="SSF51126">
    <property type="entry name" value="Pectin lyase-like"/>
    <property type="match status" value="1"/>
</dbReference>
<dbReference type="PROSITE" id="PS00018">
    <property type="entry name" value="EF_HAND_1"/>
    <property type="match status" value="1"/>
</dbReference>
<reference key="1">
    <citation type="journal article" date="2008" name="PLoS Genet.">
        <title>Genomic islands in the pathogenic filamentous fungus Aspergillus fumigatus.</title>
        <authorList>
            <person name="Fedorova N.D."/>
            <person name="Khaldi N."/>
            <person name="Joardar V.S."/>
            <person name="Maiti R."/>
            <person name="Amedeo P."/>
            <person name="Anderson M.J."/>
            <person name="Crabtree J."/>
            <person name="Silva J.C."/>
            <person name="Badger J.H."/>
            <person name="Albarraq A."/>
            <person name="Angiuoli S."/>
            <person name="Bussey H."/>
            <person name="Bowyer P."/>
            <person name="Cotty P.J."/>
            <person name="Dyer P.S."/>
            <person name="Egan A."/>
            <person name="Galens K."/>
            <person name="Fraser-Liggett C.M."/>
            <person name="Haas B.J."/>
            <person name="Inman J.M."/>
            <person name="Kent R."/>
            <person name="Lemieux S."/>
            <person name="Malavazi I."/>
            <person name="Orvis J."/>
            <person name="Roemer T."/>
            <person name="Ronning C.M."/>
            <person name="Sundaram J.P."/>
            <person name="Sutton G."/>
            <person name="Turner G."/>
            <person name="Venter J.C."/>
            <person name="White O.R."/>
            <person name="Whitty B.R."/>
            <person name="Youngman P."/>
            <person name="Wolfe K.H."/>
            <person name="Goldman G.H."/>
            <person name="Wortman J.R."/>
            <person name="Jiang B."/>
            <person name="Denning D.W."/>
            <person name="Nierman W.C."/>
        </authorList>
    </citation>
    <scope>NUCLEOTIDE SEQUENCE [LARGE SCALE GENOMIC DNA]</scope>
    <source>
        <strain>CBS 144.89 / FGSC A1163 / CEA10</strain>
    </source>
</reference>
<proteinExistence type="inferred from homology"/>